<comment type="function">
    <text evidence="3">Acts as a sodium-dependent hypoxanthine transporter (PubMed:35094660). May show xanthine-hypoxanthine exchange activity (PubMed:35094660).</text>
</comment>
<comment type="catalytic activity">
    <reaction evidence="3">
        <text>hypoxanthine(out) + Na(+)(out) = hypoxanthine(in) + Na(+)(in)</text>
        <dbReference type="Rhea" id="RHEA:76279"/>
        <dbReference type="ChEBI" id="CHEBI:17368"/>
        <dbReference type="ChEBI" id="CHEBI:29101"/>
    </reaction>
</comment>
<comment type="subcellular location">
    <subcellularLocation>
        <location evidence="6">Membrane</location>
        <topology evidence="1">Multi-pass membrane protein</topology>
    </subcellularLocation>
</comment>
<comment type="alternative products">
    <event type="alternative splicing"/>
    <isoform>
        <id>Q6PIS1-1</id>
        <name>1</name>
        <sequence type="displayed"/>
    </isoform>
    <isoform>
        <id>Q6PIS1-2</id>
        <name>2</name>
        <sequence type="described" ref="VSP_033970"/>
    </isoform>
    <isoform>
        <id>Q6PIS1-5</id>
        <name>3</name>
        <sequence type="described" ref="VSP_043670"/>
    </isoform>
</comment>
<comment type="similarity">
    <text evidence="6">Belongs to the nucleobase:cation symporter-2 (NCS2) (TC 2.A.40) family.</text>
</comment>
<comment type="sequence caution" evidence="6">
    <conflict type="miscellaneous discrepancy">
        <sequence resource="EMBL-CDS" id="ABC17635"/>
    </conflict>
    <text>Fragment of a potential novel isoform.</text>
</comment>
<comment type="sequence caution" evidence="6">
    <conflict type="miscellaneous discrepancy">
        <sequence resource="EMBL-CDS" id="BAB70999"/>
    </conflict>
    <text>Intron retention.</text>
</comment>
<reference key="1">
    <citation type="journal article" date="2004" name="Nat. Genet.">
        <title>Complete sequencing and characterization of 21,243 full-length human cDNAs.</title>
        <authorList>
            <person name="Ota T."/>
            <person name="Suzuki Y."/>
            <person name="Nishikawa T."/>
            <person name="Otsuki T."/>
            <person name="Sugiyama T."/>
            <person name="Irie R."/>
            <person name="Wakamatsu A."/>
            <person name="Hayashi K."/>
            <person name="Sato H."/>
            <person name="Nagai K."/>
            <person name="Kimura K."/>
            <person name="Makita H."/>
            <person name="Sekine M."/>
            <person name="Obayashi M."/>
            <person name="Nishi T."/>
            <person name="Shibahara T."/>
            <person name="Tanaka T."/>
            <person name="Ishii S."/>
            <person name="Yamamoto J."/>
            <person name="Saito K."/>
            <person name="Kawai Y."/>
            <person name="Isono Y."/>
            <person name="Nakamura Y."/>
            <person name="Nagahari K."/>
            <person name="Murakami K."/>
            <person name="Yasuda T."/>
            <person name="Iwayanagi T."/>
            <person name="Wagatsuma M."/>
            <person name="Shiratori A."/>
            <person name="Sudo H."/>
            <person name="Hosoiri T."/>
            <person name="Kaku Y."/>
            <person name="Kodaira H."/>
            <person name="Kondo H."/>
            <person name="Sugawara M."/>
            <person name="Takahashi M."/>
            <person name="Kanda K."/>
            <person name="Yokoi T."/>
            <person name="Furuya T."/>
            <person name="Kikkawa E."/>
            <person name="Omura Y."/>
            <person name="Abe K."/>
            <person name="Kamihara K."/>
            <person name="Katsuta N."/>
            <person name="Sato K."/>
            <person name="Tanikawa M."/>
            <person name="Yamazaki M."/>
            <person name="Ninomiya K."/>
            <person name="Ishibashi T."/>
            <person name="Yamashita H."/>
            <person name="Murakawa K."/>
            <person name="Fujimori K."/>
            <person name="Tanai H."/>
            <person name="Kimata M."/>
            <person name="Watanabe M."/>
            <person name="Hiraoka S."/>
            <person name="Chiba Y."/>
            <person name="Ishida S."/>
            <person name="Ono Y."/>
            <person name="Takiguchi S."/>
            <person name="Watanabe S."/>
            <person name="Yosida M."/>
            <person name="Hotuta T."/>
            <person name="Kusano J."/>
            <person name="Kanehori K."/>
            <person name="Takahashi-Fujii A."/>
            <person name="Hara H."/>
            <person name="Tanase T.-O."/>
            <person name="Nomura Y."/>
            <person name="Togiya S."/>
            <person name="Komai F."/>
            <person name="Hara R."/>
            <person name="Takeuchi K."/>
            <person name="Arita M."/>
            <person name="Imose N."/>
            <person name="Musashino K."/>
            <person name="Yuuki H."/>
            <person name="Oshima A."/>
            <person name="Sasaki N."/>
            <person name="Aotsuka S."/>
            <person name="Yoshikawa Y."/>
            <person name="Matsunawa H."/>
            <person name="Ichihara T."/>
            <person name="Shiohata N."/>
            <person name="Sano S."/>
            <person name="Moriya S."/>
            <person name="Momiyama H."/>
            <person name="Satoh N."/>
            <person name="Takami S."/>
            <person name="Terashima Y."/>
            <person name="Suzuki O."/>
            <person name="Nakagawa S."/>
            <person name="Senoh A."/>
            <person name="Mizoguchi H."/>
            <person name="Goto Y."/>
            <person name="Shimizu F."/>
            <person name="Wakebe H."/>
            <person name="Hishigaki H."/>
            <person name="Watanabe T."/>
            <person name="Sugiyama A."/>
            <person name="Takemoto M."/>
            <person name="Kawakami B."/>
            <person name="Yamazaki M."/>
            <person name="Watanabe K."/>
            <person name="Kumagai A."/>
            <person name="Itakura S."/>
            <person name="Fukuzumi Y."/>
            <person name="Fujimori Y."/>
            <person name="Komiyama M."/>
            <person name="Tashiro H."/>
            <person name="Tanigami A."/>
            <person name="Fujiwara T."/>
            <person name="Ono T."/>
            <person name="Yamada K."/>
            <person name="Fujii Y."/>
            <person name="Ozaki K."/>
            <person name="Hirao M."/>
            <person name="Ohmori Y."/>
            <person name="Kawabata A."/>
            <person name="Hikiji T."/>
            <person name="Kobatake N."/>
            <person name="Inagaki H."/>
            <person name="Ikema Y."/>
            <person name="Okamoto S."/>
            <person name="Okitani R."/>
            <person name="Kawakami T."/>
            <person name="Noguchi S."/>
            <person name="Itoh T."/>
            <person name="Shigeta K."/>
            <person name="Senba T."/>
            <person name="Matsumura K."/>
            <person name="Nakajima Y."/>
            <person name="Mizuno T."/>
            <person name="Morinaga M."/>
            <person name="Sasaki M."/>
            <person name="Togashi T."/>
            <person name="Oyama M."/>
            <person name="Hata H."/>
            <person name="Watanabe M."/>
            <person name="Komatsu T."/>
            <person name="Mizushima-Sugano J."/>
            <person name="Satoh T."/>
            <person name="Shirai Y."/>
            <person name="Takahashi Y."/>
            <person name="Nakagawa K."/>
            <person name="Okumura K."/>
            <person name="Nagase T."/>
            <person name="Nomura N."/>
            <person name="Kikuchi H."/>
            <person name="Masuho Y."/>
            <person name="Yamashita R."/>
            <person name="Nakai K."/>
            <person name="Yada T."/>
            <person name="Nakamura Y."/>
            <person name="Ohara O."/>
            <person name="Isogai T."/>
            <person name="Sugano S."/>
        </authorList>
    </citation>
    <scope>NUCLEOTIDE SEQUENCE [LARGE SCALE MRNA] (ISOFORM 3)</scope>
    <scope>NUCLEOTIDE SEQUENCE [LARGE SCALE MRNA] OF 1-225 (ISOFORM 1)</scope>
    <source>
        <tissue>Kidney</tissue>
    </source>
</reference>
<reference key="2">
    <citation type="journal article" date="2005" name="Nature">
        <title>Generation and annotation of the DNA sequences of human chromosomes 2 and 4.</title>
        <authorList>
            <person name="Hillier L.W."/>
            <person name="Graves T.A."/>
            <person name="Fulton R.S."/>
            <person name="Fulton L.A."/>
            <person name="Pepin K.H."/>
            <person name="Minx P."/>
            <person name="Wagner-McPherson C."/>
            <person name="Layman D."/>
            <person name="Wylie K."/>
            <person name="Sekhon M."/>
            <person name="Becker M.C."/>
            <person name="Fewell G.A."/>
            <person name="Delehaunty K.D."/>
            <person name="Miner T.L."/>
            <person name="Nash W.E."/>
            <person name="Kremitzki C."/>
            <person name="Oddy L."/>
            <person name="Du H."/>
            <person name="Sun H."/>
            <person name="Bradshaw-Cordum H."/>
            <person name="Ali J."/>
            <person name="Carter J."/>
            <person name="Cordes M."/>
            <person name="Harris A."/>
            <person name="Isak A."/>
            <person name="van Brunt A."/>
            <person name="Nguyen C."/>
            <person name="Du F."/>
            <person name="Courtney L."/>
            <person name="Kalicki J."/>
            <person name="Ozersky P."/>
            <person name="Abbott S."/>
            <person name="Armstrong J."/>
            <person name="Belter E.A."/>
            <person name="Caruso L."/>
            <person name="Cedroni M."/>
            <person name="Cotton M."/>
            <person name="Davidson T."/>
            <person name="Desai A."/>
            <person name="Elliott G."/>
            <person name="Erb T."/>
            <person name="Fronick C."/>
            <person name="Gaige T."/>
            <person name="Haakenson W."/>
            <person name="Haglund K."/>
            <person name="Holmes A."/>
            <person name="Harkins R."/>
            <person name="Kim K."/>
            <person name="Kruchowski S.S."/>
            <person name="Strong C.M."/>
            <person name="Grewal N."/>
            <person name="Goyea E."/>
            <person name="Hou S."/>
            <person name="Levy A."/>
            <person name="Martinka S."/>
            <person name="Mead K."/>
            <person name="McLellan M.D."/>
            <person name="Meyer R."/>
            <person name="Randall-Maher J."/>
            <person name="Tomlinson C."/>
            <person name="Dauphin-Kohlberg S."/>
            <person name="Kozlowicz-Reilly A."/>
            <person name="Shah N."/>
            <person name="Swearengen-Shahid S."/>
            <person name="Snider J."/>
            <person name="Strong J.T."/>
            <person name="Thompson J."/>
            <person name="Yoakum M."/>
            <person name="Leonard S."/>
            <person name="Pearman C."/>
            <person name="Trani L."/>
            <person name="Radionenko M."/>
            <person name="Waligorski J.E."/>
            <person name="Wang C."/>
            <person name="Rock S.M."/>
            <person name="Tin-Wollam A.-M."/>
            <person name="Maupin R."/>
            <person name="Latreille P."/>
            <person name="Wendl M.C."/>
            <person name="Yang S.-P."/>
            <person name="Pohl C."/>
            <person name="Wallis J.W."/>
            <person name="Spieth J."/>
            <person name="Bieri T.A."/>
            <person name="Berkowicz N."/>
            <person name="Nelson J.O."/>
            <person name="Osborne J."/>
            <person name="Ding L."/>
            <person name="Meyer R."/>
            <person name="Sabo A."/>
            <person name="Shotland Y."/>
            <person name="Sinha P."/>
            <person name="Wohldmann P.E."/>
            <person name="Cook L.L."/>
            <person name="Hickenbotham M.T."/>
            <person name="Eldred J."/>
            <person name="Williams D."/>
            <person name="Jones T.A."/>
            <person name="She X."/>
            <person name="Ciccarelli F.D."/>
            <person name="Izaurralde E."/>
            <person name="Taylor J."/>
            <person name="Schmutz J."/>
            <person name="Myers R.M."/>
            <person name="Cox D.R."/>
            <person name="Huang X."/>
            <person name="McPherson J.D."/>
            <person name="Mardis E.R."/>
            <person name="Clifton S.W."/>
            <person name="Warren W.C."/>
            <person name="Chinwalla A.T."/>
            <person name="Eddy S.R."/>
            <person name="Marra M.A."/>
            <person name="Ovcharenko I."/>
            <person name="Furey T.S."/>
            <person name="Miller W."/>
            <person name="Eichler E.E."/>
            <person name="Bork P."/>
            <person name="Suyama M."/>
            <person name="Torrents D."/>
            <person name="Waterston R.H."/>
            <person name="Wilson R.K."/>
        </authorList>
    </citation>
    <scope>NUCLEOTIDE SEQUENCE [LARGE SCALE GENOMIC DNA]</scope>
</reference>
<reference key="3">
    <citation type="journal article" date="2004" name="Genome Res.">
        <title>The status, quality, and expansion of the NIH full-length cDNA project: the Mammalian Gene Collection (MGC).</title>
        <authorList>
            <consortium name="The MGC Project Team"/>
        </authorList>
    </citation>
    <scope>NUCLEOTIDE SEQUENCE [LARGE SCALE MRNA] (ISOFORM 2)</scope>
    <source>
        <tissue>Colon</tissue>
    </source>
</reference>
<reference key="4">
    <citation type="submission" date="2005-11" db="EMBL/GenBank/DDBJ databases">
        <title>Cloning and analysis of the cDNA of Hepatitis C virus E2-binding protein 3.</title>
        <authorList>
            <person name="Cheng J."/>
            <person name="Lan X.-Y."/>
            <person name="Zhang L.-Y."/>
            <person name="Guo J."/>
        </authorList>
    </citation>
    <scope>NUCLEOTIDE SEQUENCE [MRNA] OF 108-225 (ISOFORM 1)</scope>
</reference>
<reference key="5">
    <citation type="journal article" date="2022" name="Nucleosides Nucleotides Nucleic Acids">
        <title>SLC23A3 is a renal hypoxanthine transporter.</title>
        <authorList>
            <person name="Hosoyamada M."/>
            <person name="Tomioka N.H."/>
            <person name="Watanabe T."/>
            <person name="Yasuno N."/>
            <person name="Uchida S."/>
            <person name="Shibata S."/>
        </authorList>
    </citation>
    <scope>FUNCTION</scope>
    <scope>TRANSPORTER ACTIVITY</scope>
</reference>
<dbReference type="EMBL" id="AK055730">
    <property type="protein sequence ID" value="BAB70999.1"/>
    <property type="status" value="ALT_SEQ"/>
    <property type="molecule type" value="mRNA"/>
</dbReference>
<dbReference type="EMBL" id="AK298277">
    <property type="protein sequence ID" value="BAH12748.1"/>
    <property type="molecule type" value="mRNA"/>
</dbReference>
<dbReference type="EMBL" id="AC020575">
    <property type="status" value="NOT_ANNOTATED_CDS"/>
    <property type="molecule type" value="Genomic_DNA"/>
</dbReference>
<dbReference type="EMBL" id="AC068946">
    <property type="status" value="NOT_ANNOTATED_CDS"/>
    <property type="molecule type" value="Genomic_DNA"/>
</dbReference>
<dbReference type="EMBL" id="AC097468">
    <property type="status" value="NOT_ANNOTATED_CDS"/>
    <property type="molecule type" value="Genomic_DNA"/>
</dbReference>
<dbReference type="EMBL" id="BC030243">
    <property type="protein sequence ID" value="AAH30243.1"/>
    <property type="molecule type" value="mRNA"/>
</dbReference>
<dbReference type="EMBL" id="DQ294736">
    <property type="protein sequence ID" value="ABC17635.1"/>
    <property type="status" value="ALT_SEQ"/>
    <property type="molecule type" value="mRNA"/>
</dbReference>
<dbReference type="CCDS" id="CCDS42819.1">
    <molecule id="Q6PIS1-2"/>
</dbReference>
<dbReference type="CCDS" id="CCDS46517.1">
    <molecule id="Q6PIS1-5"/>
</dbReference>
<dbReference type="CCDS" id="CCDS46518.1">
    <molecule id="Q6PIS1-1"/>
</dbReference>
<dbReference type="RefSeq" id="NP_001138361.1">
    <molecule id="Q6PIS1-1"/>
    <property type="nucleotide sequence ID" value="NM_001144889.2"/>
</dbReference>
<dbReference type="RefSeq" id="NP_001138362.1">
    <molecule id="Q6PIS1-5"/>
    <property type="nucleotide sequence ID" value="NM_001144890.2"/>
</dbReference>
<dbReference type="RefSeq" id="NP_653313.3">
    <molecule id="Q6PIS1-2"/>
    <property type="nucleotide sequence ID" value="NM_144712.4"/>
</dbReference>
<dbReference type="SMR" id="Q6PIS1"/>
<dbReference type="BioGRID" id="127365">
    <property type="interactions" value="3"/>
</dbReference>
<dbReference type="FunCoup" id="Q6PIS1">
    <property type="interactions" value="1"/>
</dbReference>
<dbReference type="IntAct" id="Q6PIS1">
    <property type="interactions" value="3"/>
</dbReference>
<dbReference type="STRING" id="9606.ENSP00000406546"/>
<dbReference type="TCDB" id="2.A.40.6.4">
    <property type="family name" value="the nucleobase/ascorbate transporter (nat) or nucleobase:cation symporter-2 (ncs2) family"/>
</dbReference>
<dbReference type="PhosphoSitePlus" id="Q6PIS1"/>
<dbReference type="BioMuta" id="SLC23A3"/>
<dbReference type="DMDM" id="189046185"/>
<dbReference type="MassIVE" id="Q6PIS1"/>
<dbReference type="PaxDb" id="9606-ENSP00000406546"/>
<dbReference type="PeptideAtlas" id="Q6PIS1"/>
<dbReference type="Antibodypedia" id="11409">
    <property type="antibodies" value="58 antibodies from 17 providers"/>
</dbReference>
<dbReference type="DNASU" id="151295"/>
<dbReference type="Ensembl" id="ENST00000295738.11">
    <molecule id="Q6PIS1-2"/>
    <property type="protein sequence ID" value="ENSP00000295738.7"/>
    <property type="gene ID" value="ENSG00000213901.11"/>
</dbReference>
<dbReference type="Ensembl" id="ENST00000409878.8">
    <molecule id="Q6PIS1-1"/>
    <property type="protein sequence ID" value="ENSP00000386473.4"/>
    <property type="gene ID" value="ENSG00000213901.11"/>
</dbReference>
<dbReference type="Ensembl" id="ENST00000455516.6">
    <molecule id="Q6PIS1-5"/>
    <property type="protein sequence ID" value="ENSP00000406546.2"/>
    <property type="gene ID" value="ENSG00000213901.11"/>
</dbReference>
<dbReference type="GeneID" id="151295"/>
<dbReference type="KEGG" id="hsa:151295"/>
<dbReference type="MANE-Select" id="ENST00000409878.8">
    <property type="protein sequence ID" value="ENSP00000386473.4"/>
    <property type="RefSeq nucleotide sequence ID" value="NM_001144889.2"/>
    <property type="RefSeq protein sequence ID" value="NP_001138361.1"/>
</dbReference>
<dbReference type="UCSC" id="uc010fwb.4">
    <molecule id="Q6PIS1-1"/>
    <property type="organism name" value="human"/>
</dbReference>
<dbReference type="AGR" id="HGNC:20601"/>
<dbReference type="CTD" id="151295"/>
<dbReference type="DisGeNET" id="151295"/>
<dbReference type="GeneCards" id="SLC23A3"/>
<dbReference type="HGNC" id="HGNC:20601">
    <property type="gene designation" value="SLC23A3"/>
</dbReference>
<dbReference type="HPA" id="ENSG00000213901">
    <property type="expression patterns" value="Group enriched (intestine, kidney)"/>
</dbReference>
<dbReference type="MIM" id="620339">
    <property type="type" value="gene"/>
</dbReference>
<dbReference type="neXtProt" id="NX_Q6PIS1"/>
<dbReference type="OpenTargets" id="ENSG00000213901"/>
<dbReference type="PharmGKB" id="PA134932069"/>
<dbReference type="VEuPathDB" id="HostDB:ENSG00000213901"/>
<dbReference type="eggNOG" id="KOG1292">
    <property type="taxonomic scope" value="Eukaryota"/>
</dbReference>
<dbReference type="GeneTree" id="ENSGT00950000182953"/>
<dbReference type="HOGENOM" id="CLU_017959_5_4_1"/>
<dbReference type="InParanoid" id="Q6PIS1"/>
<dbReference type="OMA" id="LTWGLSC"/>
<dbReference type="OrthoDB" id="1641903at2759"/>
<dbReference type="PAN-GO" id="Q6PIS1">
    <property type="GO annotations" value="1 GO annotation based on evolutionary models"/>
</dbReference>
<dbReference type="PhylomeDB" id="Q6PIS1"/>
<dbReference type="TreeFam" id="TF313272"/>
<dbReference type="PathwayCommons" id="Q6PIS1"/>
<dbReference type="SignaLink" id="Q6PIS1"/>
<dbReference type="BioGRID-ORCS" id="151295">
    <property type="hits" value="13 hits in 1151 CRISPR screens"/>
</dbReference>
<dbReference type="ChiTaRS" id="SLC23A3">
    <property type="organism name" value="human"/>
</dbReference>
<dbReference type="GenomeRNAi" id="151295"/>
<dbReference type="Pharos" id="Q6PIS1">
    <property type="development level" value="Tdark"/>
</dbReference>
<dbReference type="PRO" id="PR:Q6PIS1"/>
<dbReference type="Proteomes" id="UP000005640">
    <property type="component" value="Chromosome 2"/>
</dbReference>
<dbReference type="RNAct" id="Q6PIS1">
    <property type="molecule type" value="protein"/>
</dbReference>
<dbReference type="Bgee" id="ENSG00000213901">
    <property type="expression patterns" value="Expressed in kidney epithelium and 128 other cell types or tissues"/>
</dbReference>
<dbReference type="ExpressionAtlas" id="Q6PIS1">
    <property type="expression patterns" value="baseline and differential"/>
</dbReference>
<dbReference type="GO" id="GO:0016020">
    <property type="term" value="C:membrane"/>
    <property type="evidence" value="ECO:0007669"/>
    <property type="project" value="UniProtKB-SubCell"/>
</dbReference>
<dbReference type="GO" id="GO:0022857">
    <property type="term" value="F:transmembrane transporter activity"/>
    <property type="evidence" value="ECO:0007669"/>
    <property type="project" value="InterPro"/>
</dbReference>
<dbReference type="GO" id="GO:0035344">
    <property type="term" value="P:hypoxanthine transport"/>
    <property type="evidence" value="ECO:0000314"/>
    <property type="project" value="UniProtKB"/>
</dbReference>
<dbReference type="InterPro" id="IPR006043">
    <property type="entry name" value="NCS2"/>
</dbReference>
<dbReference type="PANTHER" id="PTHR11119">
    <property type="entry name" value="XANTHINE-URACIL / VITAMIN C PERMEASE FAMILY MEMBER"/>
    <property type="match status" value="1"/>
</dbReference>
<dbReference type="Pfam" id="PF00860">
    <property type="entry name" value="Xan_ur_permease"/>
    <property type="match status" value="1"/>
</dbReference>
<feature type="chain" id="PRO_0000337203" description="Solute carrier family 23 member 3">
    <location>
        <begin position="1"/>
        <end position="610"/>
    </location>
</feature>
<feature type="topological domain" description="Cytoplasmic" evidence="1">
    <location>
        <begin position="1"/>
        <end position="49"/>
    </location>
</feature>
<feature type="transmembrane region" description="Helical" evidence="1">
    <location>
        <begin position="50"/>
        <end position="70"/>
    </location>
</feature>
<feature type="topological domain" description="Extracellular" evidence="1">
    <location>
        <begin position="71"/>
        <end position="85"/>
    </location>
</feature>
<feature type="transmembrane region" description="Helical" evidence="1">
    <location>
        <begin position="86"/>
        <end position="106"/>
    </location>
</feature>
<feature type="topological domain" description="Cytoplasmic" evidence="1">
    <location>
        <begin position="107"/>
        <end position="164"/>
    </location>
</feature>
<feature type="transmembrane region" description="Helical" evidence="1">
    <location>
        <begin position="165"/>
        <end position="185"/>
    </location>
</feature>
<feature type="topological domain" description="Extracellular" evidence="1">
    <location>
        <begin position="186"/>
        <end position="187"/>
    </location>
</feature>
<feature type="transmembrane region" description="Helical" evidence="1">
    <location>
        <begin position="188"/>
        <end position="208"/>
    </location>
</feature>
<feature type="topological domain" description="Cytoplasmic" evidence="1">
    <location>
        <begin position="209"/>
        <end position="211"/>
    </location>
</feature>
<feature type="transmembrane region" description="Helical" evidence="1">
    <location>
        <begin position="212"/>
        <end position="232"/>
    </location>
</feature>
<feature type="topological domain" description="Extracellular" evidence="1">
    <location>
        <begin position="233"/>
        <end position="266"/>
    </location>
</feature>
<feature type="transmembrane region" description="Helical" evidence="1">
    <location>
        <begin position="267"/>
        <end position="287"/>
    </location>
</feature>
<feature type="topological domain" description="Cytoplasmic" evidence="1">
    <location>
        <begin position="288"/>
        <end position="316"/>
    </location>
</feature>
<feature type="transmembrane region" description="Helical" evidence="1">
    <location>
        <begin position="317"/>
        <end position="337"/>
    </location>
</feature>
<feature type="topological domain" description="Extracellular" evidence="1">
    <location>
        <begin position="338"/>
        <end position="355"/>
    </location>
</feature>
<feature type="transmembrane region" description="Helical" evidence="1">
    <location>
        <begin position="356"/>
        <end position="376"/>
    </location>
</feature>
<feature type="topological domain" description="Cytoplasmic" evidence="1">
    <location>
        <begin position="377"/>
        <end position="394"/>
    </location>
</feature>
<feature type="transmembrane region" description="Helical" evidence="1">
    <location>
        <begin position="395"/>
        <end position="414"/>
    </location>
</feature>
<feature type="topological domain" description="Extracellular" evidence="1">
    <location>
        <begin position="415"/>
        <end position="423"/>
    </location>
</feature>
<feature type="transmembrane region" description="Helical" evidence="1">
    <location>
        <begin position="424"/>
        <end position="446"/>
    </location>
</feature>
<feature type="topological domain" description="Cytoplasmic" evidence="1">
    <location>
        <begin position="447"/>
        <end position="452"/>
    </location>
</feature>
<feature type="transmembrane region" description="Helical" evidence="1">
    <location>
        <begin position="453"/>
        <end position="472"/>
    </location>
</feature>
<feature type="topological domain" description="Extracellular" evidence="1">
    <location>
        <begin position="473"/>
        <end position="486"/>
    </location>
</feature>
<feature type="transmembrane region" description="Helical" evidence="1">
    <location>
        <begin position="487"/>
        <end position="507"/>
    </location>
</feature>
<feature type="topological domain" description="Cytoplasmic" evidence="1">
    <location>
        <begin position="508"/>
        <end position="610"/>
    </location>
</feature>
<feature type="region of interest" description="Disordered" evidence="2">
    <location>
        <begin position="1"/>
        <end position="32"/>
    </location>
</feature>
<feature type="region of interest" description="Disordered" evidence="2">
    <location>
        <begin position="571"/>
        <end position="610"/>
    </location>
</feature>
<feature type="compositionally biased region" description="Polar residues" evidence="2">
    <location>
        <begin position="1"/>
        <end position="16"/>
    </location>
</feature>
<feature type="compositionally biased region" description="Acidic residues" evidence="2">
    <location>
        <begin position="573"/>
        <end position="588"/>
    </location>
</feature>
<feature type="compositionally biased region" description="Basic and acidic residues" evidence="2">
    <location>
        <begin position="601"/>
        <end position="610"/>
    </location>
</feature>
<feature type="splice variant" id="VSP_043670" description="In isoform 3." evidence="4">
    <original>S</original>
    <variation>CEHRARARA</variation>
    <location>
        <position position="140"/>
    </location>
</feature>
<feature type="splice variant" id="VSP_033970" description="In isoform 2." evidence="5">
    <original>VILLMVVCSQHLGSCQFHVCPWRRASTSSTHTPLPVFRLLSVLIPVACVWIVSAFVGFSVIPQELSAPTKAPWIWLPHPGEWNWPLLTPRALAAGISMALAASTSSLGCYALCGRLLHLPPPPPHACSRGLSLEGLGSVLAGLLGSPMGTASSFPNVGKVGLI</original>
    <variation>TWAPASFMCAPGGELQRHQLTLLSLSSGSFRNCLPPPRHHGFGCLT</variation>
    <location>
        <begin position="226"/>
        <end position="388"/>
    </location>
</feature>
<feature type="sequence conflict" description="In Ref. 4; ABC17635." evidence="6" ref="4">
    <original>M</original>
    <variation>V</variation>
    <location>
        <position position="179"/>
    </location>
</feature>
<feature type="sequence conflict" description="In Ref. 3; AAH30243." evidence="6" ref="3">
    <location>
        <position position="543"/>
    </location>
</feature>
<keyword id="KW-0025">Alternative splicing</keyword>
<keyword id="KW-0472">Membrane</keyword>
<keyword id="KW-1267">Proteomics identification</keyword>
<keyword id="KW-1185">Reference proteome</keyword>
<keyword id="KW-0812">Transmembrane</keyword>
<keyword id="KW-1133">Transmembrane helix</keyword>
<evidence type="ECO:0000255" key="1"/>
<evidence type="ECO:0000256" key="2">
    <source>
        <dbReference type="SAM" id="MobiDB-lite"/>
    </source>
</evidence>
<evidence type="ECO:0000269" key="3">
    <source>
    </source>
</evidence>
<evidence type="ECO:0000303" key="4">
    <source>
    </source>
</evidence>
<evidence type="ECO:0000303" key="5">
    <source>
    </source>
</evidence>
<evidence type="ECO:0000305" key="6"/>
<name>S23A3_HUMAN</name>
<gene>
    <name type="primary">SLC23A3</name>
    <name type="synonym">E2BP3</name>
    <name type="synonym">SVCT3</name>
</gene>
<accession>Q6PIS1</accession>
<accession>B7Z512</accession>
<accession>Q2PYN6</accession>
<accession>Q96NA6</accession>
<proteinExistence type="evidence at protein level"/>
<organism>
    <name type="scientific">Homo sapiens</name>
    <name type="common">Human</name>
    <dbReference type="NCBI Taxonomy" id="9606"/>
    <lineage>
        <taxon>Eukaryota</taxon>
        <taxon>Metazoa</taxon>
        <taxon>Chordata</taxon>
        <taxon>Craniata</taxon>
        <taxon>Vertebrata</taxon>
        <taxon>Euteleostomi</taxon>
        <taxon>Mammalia</taxon>
        <taxon>Eutheria</taxon>
        <taxon>Euarchontoglires</taxon>
        <taxon>Primates</taxon>
        <taxon>Haplorrhini</taxon>
        <taxon>Catarrhini</taxon>
        <taxon>Hominidae</taxon>
        <taxon>Homo</taxon>
    </lineage>
</organism>
<sequence length="610" mass="64531">MSRSPLNPSQLRSVGSQDALAPLPPPAPQNPSTHSWDPLCGSLPWGLSCLLALQHVLVMASLLCVSHLLLLCSLSPGGLSYSPSQLLASSFFSCGMSTILQTWMGSRLPLVQAPSLEFLIPALVLTSQKLPRAIQTPGNSSLMLHLCRGPSCHGLGHWNTSLQEVSGAVVVSGLLQGMMGLLGSPGHVFPHCGPLVLAPSLVVAGLSAHREVAQFCFTHWGLALLVILLMVVCSQHLGSCQFHVCPWRRASTSSTHTPLPVFRLLSVLIPVACVWIVSAFVGFSVIPQELSAPTKAPWIWLPHPGEWNWPLLTPRALAAGISMALAASTSSLGCYALCGRLLHLPPPPPHACSRGLSLEGLGSVLAGLLGSPMGTASSFPNVGKVGLIQAGSQQVAHLVGLLCVGLGLSPRLAQLLTTIPLPVVGGVLGVTQAVVLSAGFSSFYLADIDSGRNIFIVGFSIFMALLLPRWFREAPVLFSTGWSPLDVLLHSLLTQPIFLAGLSGFLLENTIPGTQLERGLGQGLPSPFTAQEARMPQKPREKAAQVYRLPFPIQNLCPCIPQPLHCLCPLPEDPGDEEGGSSEPEEMADLLPGSGEPCPESSREGFRSQK</sequence>
<protein>
    <recommendedName>
        <fullName>Solute carrier family 23 member 3</fullName>
    </recommendedName>
    <alternativeName>
        <fullName>HPC E2-binding protein 3</fullName>
    </alternativeName>
    <alternativeName>
        <fullName>Na(+)/L-ascorbic acid transporter 3</fullName>
    </alternativeName>
    <alternativeName>
        <fullName>Sodium-dependent vitamin C transporter 3</fullName>
    </alternativeName>
</protein>